<reference key="1">
    <citation type="submission" date="2006-12" db="EMBL/GenBank/DDBJ databases">
        <title>Complete sequence of Shewanella amazonensis SB2B.</title>
        <authorList>
            <consortium name="US DOE Joint Genome Institute"/>
            <person name="Copeland A."/>
            <person name="Lucas S."/>
            <person name="Lapidus A."/>
            <person name="Barry K."/>
            <person name="Detter J.C."/>
            <person name="Glavina del Rio T."/>
            <person name="Hammon N."/>
            <person name="Israni S."/>
            <person name="Dalin E."/>
            <person name="Tice H."/>
            <person name="Pitluck S."/>
            <person name="Munk A.C."/>
            <person name="Brettin T."/>
            <person name="Bruce D."/>
            <person name="Han C."/>
            <person name="Tapia R."/>
            <person name="Gilna P."/>
            <person name="Schmutz J."/>
            <person name="Larimer F."/>
            <person name="Land M."/>
            <person name="Hauser L."/>
            <person name="Kyrpides N."/>
            <person name="Mikhailova N."/>
            <person name="Fredrickson J."/>
            <person name="Richardson P."/>
        </authorList>
    </citation>
    <scope>NUCLEOTIDE SEQUENCE [LARGE SCALE GENOMIC DNA]</scope>
    <source>
        <strain>ATCC BAA-1098 / SB2B</strain>
    </source>
</reference>
<proteinExistence type="inferred from homology"/>
<comment type="function">
    <text evidence="1">Binds directly to 16S ribosomal RNA.</text>
</comment>
<comment type="similarity">
    <text evidence="1">Belongs to the bacterial ribosomal protein bS20 family.</text>
</comment>
<keyword id="KW-1185">Reference proteome</keyword>
<keyword id="KW-0687">Ribonucleoprotein</keyword>
<keyword id="KW-0689">Ribosomal protein</keyword>
<keyword id="KW-0694">RNA-binding</keyword>
<keyword id="KW-0699">rRNA-binding</keyword>
<organism>
    <name type="scientific">Shewanella amazonensis (strain ATCC BAA-1098 / SB2B)</name>
    <dbReference type="NCBI Taxonomy" id="326297"/>
    <lineage>
        <taxon>Bacteria</taxon>
        <taxon>Pseudomonadati</taxon>
        <taxon>Pseudomonadota</taxon>
        <taxon>Gammaproteobacteria</taxon>
        <taxon>Alteromonadales</taxon>
        <taxon>Shewanellaceae</taxon>
        <taxon>Shewanella</taxon>
    </lineage>
</organism>
<gene>
    <name evidence="1" type="primary">rpsT</name>
    <name type="ordered locus">Sama_0921</name>
</gene>
<name>RS20_SHEAM</name>
<accession>A1S422</accession>
<protein>
    <recommendedName>
        <fullName evidence="1">Small ribosomal subunit protein bS20</fullName>
    </recommendedName>
    <alternativeName>
        <fullName evidence="3">30S ribosomal protein S20</fullName>
    </alternativeName>
</protein>
<sequence>MANSKTAKKRAIQSEKRRQHNASRRSMLRTYVKKVIAAIKTGDHKAATEAFAVAQPIVDRMATKGLIHKNKAARQKARLNARIKALAA</sequence>
<evidence type="ECO:0000255" key="1">
    <source>
        <dbReference type="HAMAP-Rule" id="MF_00500"/>
    </source>
</evidence>
<evidence type="ECO:0000256" key="2">
    <source>
        <dbReference type="SAM" id="MobiDB-lite"/>
    </source>
</evidence>
<evidence type="ECO:0000305" key="3"/>
<dbReference type="EMBL" id="CP000507">
    <property type="protein sequence ID" value="ABL99128.1"/>
    <property type="molecule type" value="Genomic_DNA"/>
</dbReference>
<dbReference type="RefSeq" id="WP_011759037.1">
    <property type="nucleotide sequence ID" value="NC_008700.1"/>
</dbReference>
<dbReference type="SMR" id="A1S422"/>
<dbReference type="STRING" id="326297.Sama_0921"/>
<dbReference type="KEGG" id="saz:Sama_0921"/>
<dbReference type="eggNOG" id="COG0268">
    <property type="taxonomic scope" value="Bacteria"/>
</dbReference>
<dbReference type="HOGENOM" id="CLU_160655_4_0_6"/>
<dbReference type="OrthoDB" id="9807974at2"/>
<dbReference type="Proteomes" id="UP000009175">
    <property type="component" value="Chromosome"/>
</dbReference>
<dbReference type="GO" id="GO:0005829">
    <property type="term" value="C:cytosol"/>
    <property type="evidence" value="ECO:0007669"/>
    <property type="project" value="TreeGrafter"/>
</dbReference>
<dbReference type="GO" id="GO:0015935">
    <property type="term" value="C:small ribosomal subunit"/>
    <property type="evidence" value="ECO:0007669"/>
    <property type="project" value="TreeGrafter"/>
</dbReference>
<dbReference type="GO" id="GO:0070181">
    <property type="term" value="F:small ribosomal subunit rRNA binding"/>
    <property type="evidence" value="ECO:0007669"/>
    <property type="project" value="TreeGrafter"/>
</dbReference>
<dbReference type="GO" id="GO:0003735">
    <property type="term" value="F:structural constituent of ribosome"/>
    <property type="evidence" value="ECO:0007669"/>
    <property type="project" value="InterPro"/>
</dbReference>
<dbReference type="GO" id="GO:0006412">
    <property type="term" value="P:translation"/>
    <property type="evidence" value="ECO:0007669"/>
    <property type="project" value="UniProtKB-UniRule"/>
</dbReference>
<dbReference type="FunFam" id="1.20.58.110:FF:000001">
    <property type="entry name" value="30S ribosomal protein S20"/>
    <property type="match status" value="1"/>
</dbReference>
<dbReference type="Gene3D" id="1.20.58.110">
    <property type="entry name" value="Ribosomal protein S20"/>
    <property type="match status" value="1"/>
</dbReference>
<dbReference type="HAMAP" id="MF_00500">
    <property type="entry name" value="Ribosomal_bS20"/>
    <property type="match status" value="1"/>
</dbReference>
<dbReference type="InterPro" id="IPR002583">
    <property type="entry name" value="Ribosomal_bS20"/>
</dbReference>
<dbReference type="InterPro" id="IPR036510">
    <property type="entry name" value="Ribosomal_bS20_sf"/>
</dbReference>
<dbReference type="NCBIfam" id="TIGR00029">
    <property type="entry name" value="S20"/>
    <property type="match status" value="1"/>
</dbReference>
<dbReference type="PANTHER" id="PTHR33398">
    <property type="entry name" value="30S RIBOSOMAL PROTEIN S20"/>
    <property type="match status" value="1"/>
</dbReference>
<dbReference type="PANTHER" id="PTHR33398:SF1">
    <property type="entry name" value="SMALL RIBOSOMAL SUBUNIT PROTEIN BS20C"/>
    <property type="match status" value="1"/>
</dbReference>
<dbReference type="Pfam" id="PF01649">
    <property type="entry name" value="Ribosomal_S20p"/>
    <property type="match status" value="1"/>
</dbReference>
<dbReference type="SUPFAM" id="SSF46992">
    <property type="entry name" value="Ribosomal protein S20"/>
    <property type="match status" value="1"/>
</dbReference>
<feature type="chain" id="PRO_1000014647" description="Small ribosomal subunit protein bS20">
    <location>
        <begin position="1"/>
        <end position="88"/>
    </location>
</feature>
<feature type="region of interest" description="Disordered" evidence="2">
    <location>
        <begin position="1"/>
        <end position="27"/>
    </location>
</feature>